<sequence>MEQKNKKNTIPWIWGFNVYAENWNGRLAMISFLLIICVEFITNKNVLDLVKLN</sequence>
<reference key="1">
    <citation type="journal article" date="1999" name="J. Mol. Evol.">
        <title>The plastid genome of the cryptophyte alga, Guillardia theta: complete sequence and conserved synteny groups confirm its common ancestry with red algae.</title>
        <authorList>
            <person name="Douglas S.E."/>
            <person name="Penny S.L."/>
        </authorList>
    </citation>
    <scope>NUCLEOTIDE SEQUENCE [LARGE SCALE GENOMIC DNA]</scope>
</reference>
<proteinExistence type="inferred from homology"/>
<keyword id="KW-0148">Chlorophyll</keyword>
<keyword id="KW-0150">Chloroplast</keyword>
<keyword id="KW-0157">Chromophore</keyword>
<keyword id="KW-0934">Plastid</keyword>
<evidence type="ECO:0000305" key="1"/>
<gene>
    <name type="primary">ycf17</name>
</gene>
<organism>
    <name type="scientific">Guillardia theta</name>
    <name type="common">Cryptophyte</name>
    <name type="synonym">Cryptomonas phi</name>
    <dbReference type="NCBI Taxonomy" id="55529"/>
    <lineage>
        <taxon>Eukaryota</taxon>
        <taxon>Cryptophyceae</taxon>
        <taxon>Pyrenomonadales</taxon>
        <taxon>Geminigeraceae</taxon>
        <taxon>Guillardia</taxon>
    </lineage>
</organism>
<protein>
    <recommendedName>
        <fullName>Uncharacterized protein Ycf17</fullName>
    </recommendedName>
    <alternativeName>
        <fullName>ORF48</fullName>
    </alternativeName>
</protein>
<dbReference type="EMBL" id="AF041468">
    <property type="protein sequence ID" value="AAC35610.1"/>
    <property type="molecule type" value="Genomic_DNA"/>
</dbReference>
<dbReference type="RefSeq" id="NP_050676.1">
    <property type="nucleotide sequence ID" value="NC_000926.1"/>
</dbReference>
<dbReference type="SMR" id="O78425"/>
<dbReference type="GeneID" id="856962"/>
<dbReference type="HOGENOM" id="CLU_171075_6_2_1"/>
<dbReference type="GO" id="GO:0009507">
    <property type="term" value="C:chloroplast"/>
    <property type="evidence" value="ECO:0007669"/>
    <property type="project" value="UniProtKB-SubCell"/>
</dbReference>
<dbReference type="GO" id="GO:0016168">
    <property type="term" value="F:chlorophyll binding"/>
    <property type="evidence" value="ECO:0007669"/>
    <property type="project" value="UniProtKB-KW"/>
</dbReference>
<dbReference type="SUPFAM" id="SSF103511">
    <property type="entry name" value="Chlorophyll a-b binding protein"/>
    <property type="match status" value="1"/>
</dbReference>
<feature type="chain" id="PRO_0000185448" description="Uncharacterized protein Ycf17">
    <location>
        <begin position="1"/>
        <end position="53"/>
    </location>
</feature>
<comment type="function">
    <text>Possible role in chlorophyll and/or carotenoid binding.</text>
</comment>
<comment type="subcellular location">
    <subcellularLocation>
        <location>Plastid</location>
        <location>Chloroplast</location>
    </subcellularLocation>
</comment>
<comment type="similarity">
    <text evidence="1">Belongs to the ELIP/psbS family.</text>
</comment>
<geneLocation type="chloroplast"/>
<accession>O78425</accession>
<name>YCF17_GUITH</name>